<organism>
    <name type="scientific">Mycobacterium avium (strain 104)</name>
    <dbReference type="NCBI Taxonomy" id="243243"/>
    <lineage>
        <taxon>Bacteria</taxon>
        <taxon>Bacillati</taxon>
        <taxon>Actinomycetota</taxon>
        <taxon>Actinomycetes</taxon>
        <taxon>Mycobacteriales</taxon>
        <taxon>Mycobacteriaceae</taxon>
        <taxon>Mycobacterium</taxon>
        <taxon>Mycobacterium avium complex (MAC)</taxon>
    </lineage>
</organism>
<evidence type="ECO:0000255" key="1">
    <source>
        <dbReference type="HAMAP-Rule" id="MF_00150"/>
    </source>
</evidence>
<sequence length="347" mass="35261">MADVMRVAVAGASGYAGGEILRLLLGHPAYAQGRLTIGAVTAAASAGSPLGEHHPHLTPLAQRVLEPTDAAVLAGHDVVFLALPHGHSAALADQLGADTLIVDCGADFRLTDAAAWERFYGAPHAGSWPYGLPELPGARERLRGARRIAVPGCYPTAALLALLPAMAEDLIEPAVTVVAVSGTSGAGRAAKTDLLGSEVIGSARAYNIAGAHRHTPEIAQGLAAVSGRDVTVSFTPVLIPTSRGILATCTARTTAPLSALRAAYEKTYDAEPFIYLMPEGQLPRTGAVIGSNAAHIAVAVDEAAGVLVAIAAIDNLVKGTAGAAVQSMNLALGWPETQGLSVIGVAP</sequence>
<proteinExistence type="inferred from homology"/>
<accession>A0QHB4</accession>
<protein>
    <recommendedName>
        <fullName evidence="1">N-acetyl-gamma-glutamyl-phosphate reductase</fullName>
        <shortName evidence="1">AGPR</shortName>
        <ecNumber evidence="1">1.2.1.38</ecNumber>
    </recommendedName>
    <alternativeName>
        <fullName evidence="1">N-acetyl-glutamate semialdehyde dehydrogenase</fullName>
        <shortName evidence="1">NAGSA dehydrogenase</shortName>
    </alternativeName>
</protein>
<gene>
    <name evidence="1" type="primary">argC</name>
    <name type="ordered locus">MAV_3118</name>
</gene>
<feature type="chain" id="PRO_1000011020" description="N-acetyl-gamma-glutamyl-phosphate reductase">
    <location>
        <begin position="1"/>
        <end position="347"/>
    </location>
</feature>
<feature type="active site" evidence="1">
    <location>
        <position position="153"/>
    </location>
</feature>
<reference key="1">
    <citation type="submission" date="2006-10" db="EMBL/GenBank/DDBJ databases">
        <authorList>
            <person name="Fleischmann R.D."/>
            <person name="Dodson R.J."/>
            <person name="Haft D.H."/>
            <person name="Merkel J.S."/>
            <person name="Nelson W.C."/>
            <person name="Fraser C.M."/>
        </authorList>
    </citation>
    <scope>NUCLEOTIDE SEQUENCE [LARGE SCALE GENOMIC DNA]</scope>
    <source>
        <strain>104</strain>
    </source>
</reference>
<dbReference type="EC" id="1.2.1.38" evidence="1"/>
<dbReference type="EMBL" id="CP000479">
    <property type="protein sequence ID" value="ABK69131.1"/>
    <property type="molecule type" value="Genomic_DNA"/>
</dbReference>
<dbReference type="RefSeq" id="WP_009977304.1">
    <property type="nucleotide sequence ID" value="NC_008595.1"/>
</dbReference>
<dbReference type="SMR" id="A0QHB4"/>
<dbReference type="KEGG" id="mav:MAV_3118"/>
<dbReference type="HOGENOM" id="CLU_006384_0_0_11"/>
<dbReference type="UniPathway" id="UPA00068">
    <property type="reaction ID" value="UER00108"/>
</dbReference>
<dbReference type="Proteomes" id="UP000001574">
    <property type="component" value="Chromosome"/>
</dbReference>
<dbReference type="GO" id="GO:0005737">
    <property type="term" value="C:cytoplasm"/>
    <property type="evidence" value="ECO:0007669"/>
    <property type="project" value="UniProtKB-SubCell"/>
</dbReference>
<dbReference type="GO" id="GO:0003942">
    <property type="term" value="F:N-acetyl-gamma-glutamyl-phosphate reductase activity"/>
    <property type="evidence" value="ECO:0007669"/>
    <property type="project" value="UniProtKB-UniRule"/>
</dbReference>
<dbReference type="GO" id="GO:0051287">
    <property type="term" value="F:NAD binding"/>
    <property type="evidence" value="ECO:0007669"/>
    <property type="project" value="InterPro"/>
</dbReference>
<dbReference type="GO" id="GO:0070401">
    <property type="term" value="F:NADP+ binding"/>
    <property type="evidence" value="ECO:0007669"/>
    <property type="project" value="InterPro"/>
</dbReference>
<dbReference type="GO" id="GO:0006526">
    <property type="term" value="P:L-arginine biosynthetic process"/>
    <property type="evidence" value="ECO:0007669"/>
    <property type="project" value="UniProtKB-UniRule"/>
</dbReference>
<dbReference type="CDD" id="cd24148">
    <property type="entry name" value="AGPR_1_actinobacAGPR_like"/>
    <property type="match status" value="1"/>
</dbReference>
<dbReference type="CDD" id="cd23934">
    <property type="entry name" value="AGPR_1_C"/>
    <property type="match status" value="1"/>
</dbReference>
<dbReference type="FunFam" id="3.30.360.10:FF:000014">
    <property type="entry name" value="N-acetyl-gamma-glutamyl-phosphate reductase"/>
    <property type="match status" value="1"/>
</dbReference>
<dbReference type="Gene3D" id="3.30.360.10">
    <property type="entry name" value="Dihydrodipicolinate Reductase, domain 2"/>
    <property type="match status" value="1"/>
</dbReference>
<dbReference type="Gene3D" id="3.40.50.720">
    <property type="entry name" value="NAD(P)-binding Rossmann-like Domain"/>
    <property type="match status" value="1"/>
</dbReference>
<dbReference type="HAMAP" id="MF_00150">
    <property type="entry name" value="ArgC_type1"/>
    <property type="match status" value="1"/>
</dbReference>
<dbReference type="InterPro" id="IPR023013">
    <property type="entry name" value="AGPR_AS"/>
</dbReference>
<dbReference type="InterPro" id="IPR000706">
    <property type="entry name" value="AGPR_type-1"/>
</dbReference>
<dbReference type="InterPro" id="IPR036291">
    <property type="entry name" value="NAD(P)-bd_dom_sf"/>
</dbReference>
<dbReference type="InterPro" id="IPR050085">
    <property type="entry name" value="NAGSA_dehydrogenase"/>
</dbReference>
<dbReference type="InterPro" id="IPR000534">
    <property type="entry name" value="Semialdehyde_DH_NAD-bd"/>
</dbReference>
<dbReference type="NCBIfam" id="TIGR01850">
    <property type="entry name" value="argC"/>
    <property type="match status" value="1"/>
</dbReference>
<dbReference type="PANTHER" id="PTHR32338:SF10">
    <property type="entry name" value="N-ACETYL-GAMMA-GLUTAMYL-PHOSPHATE REDUCTASE, CHLOROPLASTIC-RELATED"/>
    <property type="match status" value="1"/>
</dbReference>
<dbReference type="PANTHER" id="PTHR32338">
    <property type="entry name" value="N-ACETYL-GAMMA-GLUTAMYL-PHOSPHATE REDUCTASE, CHLOROPLASTIC-RELATED-RELATED"/>
    <property type="match status" value="1"/>
</dbReference>
<dbReference type="Pfam" id="PF01118">
    <property type="entry name" value="Semialdhyde_dh"/>
    <property type="match status" value="1"/>
</dbReference>
<dbReference type="Pfam" id="PF22698">
    <property type="entry name" value="Semialdhyde_dhC_1"/>
    <property type="match status" value="1"/>
</dbReference>
<dbReference type="SMART" id="SM00859">
    <property type="entry name" value="Semialdhyde_dh"/>
    <property type="match status" value="1"/>
</dbReference>
<dbReference type="SUPFAM" id="SSF55347">
    <property type="entry name" value="Glyceraldehyde-3-phosphate dehydrogenase-like, C-terminal domain"/>
    <property type="match status" value="1"/>
</dbReference>
<dbReference type="SUPFAM" id="SSF51735">
    <property type="entry name" value="NAD(P)-binding Rossmann-fold domains"/>
    <property type="match status" value="1"/>
</dbReference>
<dbReference type="PROSITE" id="PS01224">
    <property type="entry name" value="ARGC"/>
    <property type="match status" value="1"/>
</dbReference>
<comment type="function">
    <text evidence="1">Catalyzes the NADPH-dependent reduction of N-acetyl-5-glutamyl phosphate to yield N-acetyl-L-glutamate 5-semialdehyde.</text>
</comment>
<comment type="catalytic activity">
    <reaction evidence="1">
        <text>N-acetyl-L-glutamate 5-semialdehyde + phosphate + NADP(+) = N-acetyl-L-glutamyl 5-phosphate + NADPH + H(+)</text>
        <dbReference type="Rhea" id="RHEA:21588"/>
        <dbReference type="ChEBI" id="CHEBI:15378"/>
        <dbReference type="ChEBI" id="CHEBI:29123"/>
        <dbReference type="ChEBI" id="CHEBI:43474"/>
        <dbReference type="ChEBI" id="CHEBI:57783"/>
        <dbReference type="ChEBI" id="CHEBI:57936"/>
        <dbReference type="ChEBI" id="CHEBI:58349"/>
        <dbReference type="EC" id="1.2.1.38"/>
    </reaction>
</comment>
<comment type="pathway">
    <text evidence="1">Amino-acid biosynthesis; L-arginine biosynthesis; N(2)-acetyl-L-ornithine from L-glutamate: step 3/4.</text>
</comment>
<comment type="subcellular location">
    <subcellularLocation>
        <location evidence="1">Cytoplasm</location>
    </subcellularLocation>
</comment>
<comment type="similarity">
    <text evidence="1">Belongs to the NAGSA dehydrogenase family. Type 1 subfamily.</text>
</comment>
<name>ARGC_MYCA1</name>
<keyword id="KW-0028">Amino-acid biosynthesis</keyword>
<keyword id="KW-0055">Arginine biosynthesis</keyword>
<keyword id="KW-0963">Cytoplasm</keyword>
<keyword id="KW-0521">NADP</keyword>
<keyword id="KW-0560">Oxidoreductase</keyword>